<dbReference type="EMBL" id="AF026554">
    <property type="protein sequence ID" value="AAC12270.1"/>
    <property type="molecule type" value="mRNA"/>
</dbReference>
<dbReference type="EMBL" id="AF081205">
    <property type="protein sequence ID" value="AAC64061.1"/>
    <property type="molecule type" value="mRNA"/>
</dbReference>
<dbReference type="EMBL" id="AF081204">
    <property type="protein sequence ID" value="AAC64060.1"/>
    <property type="molecule type" value="mRNA"/>
</dbReference>
<dbReference type="RefSeq" id="NP_001421080.1">
    <property type="nucleotide sequence ID" value="NM_001434151.1"/>
</dbReference>
<dbReference type="RefSeq" id="NP_001421081.1">
    <property type="nucleotide sequence ID" value="NM_001434152.1"/>
</dbReference>
<dbReference type="RefSeq" id="NP_001421082.1">
    <property type="nucleotide sequence ID" value="NM_001434153.1"/>
</dbReference>
<dbReference type="RefSeq" id="NP_570102.1">
    <property type="nucleotide sequence ID" value="NM_130746.2"/>
</dbReference>
<dbReference type="SMR" id="O70247"/>
<dbReference type="FunCoup" id="O70247">
    <property type="interactions" value="159"/>
</dbReference>
<dbReference type="STRING" id="10116.ENSRNOP00000071291"/>
<dbReference type="ChEMBL" id="CHEMBL2176793"/>
<dbReference type="TCDB" id="2.A.21.5.2">
    <property type="family name" value="the solute:sodium symporter (sss) family"/>
</dbReference>
<dbReference type="GlyCosmos" id="O70247">
    <property type="glycosylation" value="2 sites, No reported glycans"/>
</dbReference>
<dbReference type="GlyGen" id="O70247">
    <property type="glycosylation" value="2 sites"/>
</dbReference>
<dbReference type="PhosphoSitePlus" id="O70247"/>
<dbReference type="PaxDb" id="10116-ENSRNOP00000009042"/>
<dbReference type="Ensembl" id="ENSRNOT00000082623.2">
    <property type="protein sequence ID" value="ENSRNOP00000075361.1"/>
    <property type="gene ID" value="ENSRNOG00000057628.2"/>
</dbReference>
<dbReference type="GeneID" id="170551"/>
<dbReference type="KEGG" id="rno:170551"/>
<dbReference type="AGR" id="RGD:69648"/>
<dbReference type="CTD" id="8884"/>
<dbReference type="RGD" id="69648">
    <property type="gene designation" value="Slc5a6"/>
</dbReference>
<dbReference type="eggNOG" id="KOG2349">
    <property type="taxonomic scope" value="Eukaryota"/>
</dbReference>
<dbReference type="GeneTree" id="ENSGT00940000155731"/>
<dbReference type="HOGENOM" id="CLU_018808_11_1_1"/>
<dbReference type="InParanoid" id="O70247"/>
<dbReference type="OMA" id="GWWGMRR"/>
<dbReference type="OrthoDB" id="6132759at2759"/>
<dbReference type="PhylomeDB" id="O70247"/>
<dbReference type="TreeFam" id="TF316728"/>
<dbReference type="Reactome" id="R-RNO-196780">
    <property type="pathway name" value="Biotin transport and metabolism"/>
</dbReference>
<dbReference type="Reactome" id="R-RNO-199220">
    <property type="pathway name" value="Vitamin B5 (pantothenate) metabolism"/>
</dbReference>
<dbReference type="Reactome" id="R-RNO-425397">
    <property type="pathway name" value="Transport of vitamins, nucleosides, and related molecules"/>
</dbReference>
<dbReference type="PRO" id="PR:O70247"/>
<dbReference type="Proteomes" id="UP000002494">
    <property type="component" value="Chromosome 6"/>
</dbReference>
<dbReference type="Bgee" id="ENSRNOG00000057628">
    <property type="expression patterns" value="Expressed in kidney and 20 other cell types or tissues"/>
</dbReference>
<dbReference type="ExpressionAtlas" id="O70247">
    <property type="expression patterns" value="baseline and differential"/>
</dbReference>
<dbReference type="GO" id="GO:0016324">
    <property type="term" value="C:apical plasma membrane"/>
    <property type="evidence" value="ECO:0000250"/>
    <property type="project" value="UniProtKB"/>
</dbReference>
<dbReference type="GO" id="GO:0009925">
    <property type="term" value="C:basal plasma membrane"/>
    <property type="evidence" value="ECO:0000266"/>
    <property type="project" value="RGD"/>
</dbReference>
<dbReference type="GO" id="GO:0016323">
    <property type="term" value="C:basolateral plasma membrane"/>
    <property type="evidence" value="ECO:0000266"/>
    <property type="project" value="RGD"/>
</dbReference>
<dbReference type="GO" id="GO:0031526">
    <property type="term" value="C:brush border membrane"/>
    <property type="evidence" value="ECO:0000314"/>
    <property type="project" value="RGD"/>
</dbReference>
<dbReference type="GO" id="GO:0005886">
    <property type="term" value="C:plasma membrane"/>
    <property type="evidence" value="ECO:0000266"/>
    <property type="project" value="RGD"/>
</dbReference>
<dbReference type="GO" id="GO:0042887">
    <property type="term" value="F:amide transmembrane transporter activity"/>
    <property type="evidence" value="ECO:0000266"/>
    <property type="project" value="RGD"/>
</dbReference>
<dbReference type="GO" id="GO:0015225">
    <property type="term" value="F:biotin transmembrane transporter activity"/>
    <property type="evidence" value="ECO:0000250"/>
    <property type="project" value="UniProtKB"/>
</dbReference>
<dbReference type="GO" id="GO:0015111">
    <property type="term" value="F:iodide transmembrane transporter activity"/>
    <property type="evidence" value="ECO:0000250"/>
    <property type="project" value="UniProtKB"/>
</dbReference>
<dbReference type="GO" id="GO:0140161">
    <property type="term" value="F:monocarboxylate:sodium symporter activity"/>
    <property type="evidence" value="ECO:0000266"/>
    <property type="project" value="RGD"/>
</dbReference>
<dbReference type="GO" id="GO:0015233">
    <property type="term" value="F:pantothenate transmembrane transporter activity"/>
    <property type="evidence" value="ECO:0000266"/>
    <property type="project" value="RGD"/>
</dbReference>
<dbReference type="GO" id="GO:0015498">
    <property type="term" value="F:pantothenate:sodium symporter activity"/>
    <property type="evidence" value="ECO:0000266"/>
    <property type="project" value="RGD"/>
</dbReference>
<dbReference type="GO" id="GO:0008523">
    <property type="term" value="F:sodium-dependent multivitamin transmembrane transporter activity"/>
    <property type="evidence" value="ECO:0000314"/>
    <property type="project" value="RGD"/>
</dbReference>
<dbReference type="GO" id="GO:1901682">
    <property type="term" value="F:sulfur compound transmembrane transporter activity"/>
    <property type="evidence" value="ECO:0000266"/>
    <property type="project" value="RGD"/>
</dbReference>
<dbReference type="GO" id="GO:0090482">
    <property type="term" value="F:vitamin transmembrane transporter activity"/>
    <property type="evidence" value="ECO:0000266"/>
    <property type="project" value="RGD"/>
</dbReference>
<dbReference type="GO" id="GO:1905135">
    <property type="term" value="P:biotin import across plasma membrane"/>
    <property type="evidence" value="ECO:0000250"/>
    <property type="project" value="UniProtKB"/>
</dbReference>
<dbReference type="GO" id="GO:0006768">
    <property type="term" value="P:biotin metabolic process"/>
    <property type="evidence" value="ECO:0000266"/>
    <property type="project" value="RGD"/>
</dbReference>
<dbReference type="GO" id="GO:0015878">
    <property type="term" value="P:biotin transport"/>
    <property type="evidence" value="ECO:0000314"/>
    <property type="project" value="RGD"/>
</dbReference>
<dbReference type="GO" id="GO:1904200">
    <property type="term" value="P:iodide transmembrane transport"/>
    <property type="evidence" value="ECO:0000250"/>
    <property type="project" value="UniProtKB"/>
</dbReference>
<dbReference type="GO" id="GO:0015887">
    <property type="term" value="P:pantothenate transmembrane transport"/>
    <property type="evidence" value="ECO:0000314"/>
    <property type="project" value="RGD"/>
</dbReference>
<dbReference type="GO" id="GO:0006814">
    <property type="term" value="P:sodium ion transport"/>
    <property type="evidence" value="ECO:0000318"/>
    <property type="project" value="GO_Central"/>
</dbReference>
<dbReference type="GO" id="GO:0150104">
    <property type="term" value="P:transport across blood-brain barrier"/>
    <property type="evidence" value="ECO:0000266"/>
    <property type="project" value="RGD"/>
</dbReference>
<dbReference type="FunFam" id="1.20.1730.10:FF:000011">
    <property type="entry name" value="sodium-dependent multivitamin transporter isoform X1"/>
    <property type="match status" value="1"/>
</dbReference>
<dbReference type="Gene3D" id="1.20.1730.10">
    <property type="entry name" value="Sodium/glucose cotransporter"/>
    <property type="match status" value="1"/>
</dbReference>
<dbReference type="InterPro" id="IPR038377">
    <property type="entry name" value="Na/Glc_symporter_sf"/>
</dbReference>
<dbReference type="InterPro" id="IPR001734">
    <property type="entry name" value="Na/solute_symporter"/>
</dbReference>
<dbReference type="InterPro" id="IPR018212">
    <property type="entry name" value="Na/solute_symporter_CS"/>
</dbReference>
<dbReference type="InterPro" id="IPR051163">
    <property type="entry name" value="Sodium:Solute_Symporter_SSF"/>
</dbReference>
<dbReference type="NCBIfam" id="TIGR00813">
    <property type="entry name" value="sss"/>
    <property type="match status" value="1"/>
</dbReference>
<dbReference type="PANTHER" id="PTHR42985">
    <property type="entry name" value="SODIUM-COUPLED MONOCARBOXYLATE TRANSPORTER"/>
    <property type="match status" value="1"/>
</dbReference>
<dbReference type="PANTHER" id="PTHR42985:SF2">
    <property type="entry name" value="SODIUM-DEPENDENT MULTIVITAMIN TRANSPORTER"/>
    <property type="match status" value="1"/>
</dbReference>
<dbReference type="Pfam" id="PF00474">
    <property type="entry name" value="SSF"/>
    <property type="match status" value="1"/>
</dbReference>
<dbReference type="PROSITE" id="PS00456">
    <property type="entry name" value="NA_SOLUT_SYMP_1"/>
    <property type="match status" value="1"/>
</dbReference>
<dbReference type="PROSITE" id="PS50283">
    <property type="entry name" value="NA_SOLUT_SYMP_3"/>
    <property type="match status" value="1"/>
</dbReference>
<keyword id="KW-0092">Biotin</keyword>
<keyword id="KW-1003">Cell membrane</keyword>
<keyword id="KW-0325">Glycoprotein</keyword>
<keyword id="KW-0406">Ion transport</keyword>
<keyword id="KW-0472">Membrane</keyword>
<keyword id="KW-1185">Reference proteome</keyword>
<keyword id="KW-0915">Sodium</keyword>
<keyword id="KW-0739">Sodium transport</keyword>
<keyword id="KW-0769">Symport</keyword>
<keyword id="KW-0812">Transmembrane</keyword>
<keyword id="KW-1133">Transmembrane helix</keyword>
<keyword id="KW-0813">Transport</keyword>
<protein>
    <recommendedName>
        <fullName evidence="6">Sodium-dependent multivitamin transporter</fullName>
        <shortName evidence="2">Na(+)-dependent multivitamin transporter</shortName>
    </recommendedName>
    <alternativeName>
        <fullName evidence="2">Solute carrier family 5 member 6</fullName>
    </alternativeName>
</protein>
<accession>O70247</accession>
<evidence type="ECO:0000250" key="1">
    <source>
        <dbReference type="UniProtKB" id="Q5U4D8"/>
    </source>
</evidence>
<evidence type="ECO:0000250" key="2">
    <source>
        <dbReference type="UniProtKB" id="Q9Y289"/>
    </source>
</evidence>
<evidence type="ECO:0000255" key="3"/>
<evidence type="ECO:0000269" key="4">
    <source>
    </source>
</evidence>
<evidence type="ECO:0000269" key="5">
    <source>
    </source>
</evidence>
<evidence type="ECO:0000303" key="6">
    <source>
    </source>
</evidence>
<evidence type="ECO:0000305" key="7"/>
<evidence type="ECO:0000312" key="8">
    <source>
        <dbReference type="RGD" id="69648"/>
    </source>
</evidence>
<comment type="function">
    <text evidence="1 2 5">Sodium-dependent multivitamin transporter that mediates the electrogenic transport of pantothenate, biotin, lipoate and iodide (PubMed:9516450). Functions as a Na(+)-coupled substrate symporter where the stoichiometry of Na(+):substrate is 2:1, creating an electrochemical Na(+) gradient used as driving force for substrate uptake. Required for biotin and pantothenate uptake in the intestine across the brush border membrane (By similarity). Plays a role in the maintenance of intestinal mucosa integrity, by providing the gut mucosa with biotin (By similarity). Contributes to the luminal uptake of biotin and pantothenate into the brain across the blood-brain barrier (By similarity).</text>
</comment>
<comment type="catalytic activity">
    <reaction evidence="5">
        <text>biotin(out) + 2 Na(+)(out) = biotin(in) + 2 Na(+)(in)</text>
        <dbReference type="Rhea" id="RHEA:73375"/>
        <dbReference type="ChEBI" id="CHEBI:29101"/>
        <dbReference type="ChEBI" id="CHEBI:57586"/>
    </reaction>
</comment>
<comment type="catalytic activity">
    <reaction evidence="5">
        <text>(R)-pantothenate(out) + 2 Na(+)(out) = (R)-pantothenate(in) + 2 Na(+)(in)</text>
        <dbReference type="Rhea" id="RHEA:73371"/>
        <dbReference type="ChEBI" id="CHEBI:29032"/>
        <dbReference type="ChEBI" id="CHEBI:29101"/>
    </reaction>
</comment>
<comment type="catalytic activity">
    <reaction evidence="2">
        <text>(R)-lipoate(out) + 2 Na(+)(out) = (R)-lipoate(in) + 2 Na(+)(in)</text>
        <dbReference type="Rhea" id="RHEA:73379"/>
        <dbReference type="ChEBI" id="CHEBI:29101"/>
        <dbReference type="ChEBI" id="CHEBI:83088"/>
    </reaction>
</comment>
<comment type="catalytic activity">
    <reaction evidence="2">
        <text>iodide(out) + 2 Na(+)(out) = iodide(in) + 2 Na(+)(in)</text>
        <dbReference type="Rhea" id="RHEA:71207"/>
        <dbReference type="ChEBI" id="CHEBI:16382"/>
        <dbReference type="ChEBI" id="CHEBI:29101"/>
    </reaction>
</comment>
<comment type="subunit">
    <text evidence="2">Interacts with PDZD11.</text>
</comment>
<comment type="subcellular location">
    <subcellularLocation>
        <location evidence="2">Cell membrane</location>
        <topology evidence="3">Multi-pass membrane protein</topology>
    </subcellularLocation>
    <subcellularLocation>
        <location evidence="2">Apical cell membrane</location>
        <topology evidence="3">Multi-pass membrane protein</topology>
    </subcellularLocation>
</comment>
<comment type="tissue specificity">
    <text evidence="4 5">Expressed in the jejunum (at protein level) (PubMed:12620923). Expressed in lung, skeletal muscle, heart, brain, kidney, intestine, liver, and placenta (PubMed:12620923, PubMed:9516450).</text>
</comment>
<comment type="developmental stage">
    <text evidence="4">Expressed in the jejunum in 13-14 days old animals (at protein level) (PubMed:12620923). Expressed in the kidney in 13-14 days old animals (PubMed:12620923).</text>
</comment>
<comment type="domain">
    <text evidence="2">The C-terminal tail is important for biotin uptake as well as apical localization in polarized cells.</text>
</comment>
<comment type="similarity">
    <text evidence="7">Belongs to the sodium:solute symporter (SSF) (TC 2.A.21) family.</text>
</comment>
<proteinExistence type="evidence at protein level"/>
<reference key="1">
    <citation type="journal article" date="1998" name="J. Biol. Chem.">
        <title>Cloning and functional expression of a cDNA encoding a mammalian sodium-dependent vitamin transporter mediating the uptake of pantothenate, biotin, and lipoate.</title>
        <authorList>
            <person name="Prasad P.D."/>
            <person name="Wang H."/>
            <person name="Kekuda R."/>
            <person name="Fujita T."/>
            <person name="Fei Y.-J."/>
            <person name="Devoe L.D."/>
            <person name="Leibach F.H."/>
            <person name="Ganapathy V."/>
        </authorList>
    </citation>
    <scope>NUCLEOTIDE SEQUENCE [MRNA]</scope>
    <scope>FUNCTION</scope>
    <scope>TRANSPORTER ACTIVITY</scope>
    <scope>TISSUE SPECIFICITY</scope>
    <source>
        <tissue>Placenta</tissue>
    </source>
</reference>
<reference key="2">
    <citation type="submission" date="1998-08" db="EMBL/GenBank/DDBJ databases">
        <title>Cloning and characterization of rat kidney sodium dependent multivitamin transporter.</title>
        <authorList>
            <person name="Kumar C.K."/>
            <person name="Chatterjee N.S."/>
            <person name="Rubin S.A."/>
            <person name="Said H.M."/>
        </authorList>
    </citation>
    <scope>NUCLEOTIDE SEQUENCE [MRNA]</scope>
    <source>
        <tissue>Kidney</tissue>
        <tissue>Small intestine</tissue>
    </source>
</reference>
<reference key="3">
    <citation type="journal article" date="2003" name="Am. J. Physiol.">
        <title>Comparative analysis of ontogenic changes in renal and intestinal biotin transport in the rat.</title>
        <authorList>
            <person name="Nabokina S.M."/>
            <person name="Subramanian V.S."/>
            <person name="Said H.M."/>
        </authorList>
    </citation>
    <scope>TISSUE SPECIFICITY</scope>
    <scope>DEVELOPMENTAL STAGE</scope>
</reference>
<gene>
    <name evidence="8" type="primary">Slc5a6</name>
    <name type="synonym">Smvt</name>
</gene>
<organism>
    <name type="scientific">Rattus norvegicus</name>
    <name type="common">Rat</name>
    <dbReference type="NCBI Taxonomy" id="10116"/>
    <lineage>
        <taxon>Eukaryota</taxon>
        <taxon>Metazoa</taxon>
        <taxon>Chordata</taxon>
        <taxon>Craniata</taxon>
        <taxon>Vertebrata</taxon>
        <taxon>Euteleostomi</taxon>
        <taxon>Mammalia</taxon>
        <taxon>Eutheria</taxon>
        <taxon>Euarchontoglires</taxon>
        <taxon>Glires</taxon>
        <taxon>Rodentia</taxon>
        <taxon>Myomorpha</taxon>
        <taxon>Muroidea</taxon>
        <taxon>Muridae</taxon>
        <taxon>Murinae</taxon>
        <taxon>Rattus</taxon>
    </lineage>
</organism>
<name>SC5A6_RAT</name>
<sequence>MTVASTAAPSYTTSDTNRVISTFSVVDYVVFGLLLVLSLVIGLYHACRGWGRHTVGELLMADRKMGCLPVALSLLATFQSAVAILGGPAEIYRFGTQYWFLGCSYFLGLLIPAHIFIPVFYRLHLTSAYEYLELRFNKAVRICGTVTFIFQMVVYMGVALYAPSLALNAVTGFDLWLSVLALGIVCNIYTALGGLKAVIWTDVFQTLIMFLGQLVVIIVGAAKVGGLGHVWAVASQHGLISGIELDPDPFVRHTFWTLAFGGVFMMLSLYGVNQAQVQRYLSSHSEKAAVLSCYAVFPCQQVALCMSCLIGLVMFAYYKKYSMSPQQEQAAPDQLVLYFVMDLLKDMPGLPGLFVACLFSGSLSTISSAFNSLATVTMEDLIQPWFPQLTETRAIMLSRSLAFAYGLVCLGMAYVSSHLGSVLQAALSIFGMVGGPLLGLFCLGMFFPCANPLGAIVGLLTGLTMAFWIGIGSIVSRMSSAAASPPLNGSSSFLPSNLTVATVTTLMPSTLSKPTGLQQFYSLSYLWYSAHNSTTVIAVGLIVSLLTGGMRGRSLNPGTIYPVLPKLLALLPLSCQKRLCWRSHNQDIPVVTNLFPEKMGNGALQDSRDKERMAEDGLVHQPCSPTYIVQETSL</sequence>
<feature type="chain" id="PRO_0000105389" description="Sodium-dependent multivitamin transporter">
    <location>
        <begin position="1"/>
        <end position="634"/>
    </location>
</feature>
<feature type="transmembrane region" description="Helical" evidence="3">
    <location>
        <begin position="23"/>
        <end position="43"/>
    </location>
</feature>
<feature type="transmembrane region" description="Helical" evidence="3">
    <location>
        <begin position="65"/>
        <end position="85"/>
    </location>
</feature>
<feature type="transmembrane region" description="Helical" evidence="3">
    <location>
        <begin position="100"/>
        <end position="120"/>
    </location>
</feature>
<feature type="transmembrane region" description="Helical" evidence="3">
    <location>
        <begin position="142"/>
        <end position="162"/>
    </location>
</feature>
<feature type="transmembrane region" description="Helical" evidence="3">
    <location>
        <begin position="175"/>
        <end position="195"/>
    </location>
</feature>
<feature type="transmembrane region" description="Helical" evidence="3">
    <location>
        <begin position="207"/>
        <end position="227"/>
    </location>
</feature>
<feature type="transmembrane region" description="Helical" evidence="3">
    <location>
        <begin position="255"/>
        <end position="275"/>
    </location>
</feature>
<feature type="transmembrane region" description="Helical" evidence="3">
    <location>
        <begin position="295"/>
        <end position="315"/>
    </location>
</feature>
<feature type="transmembrane region" description="Helical" evidence="3">
    <location>
        <begin position="350"/>
        <end position="370"/>
    </location>
</feature>
<feature type="transmembrane region" description="Helical" evidence="3">
    <location>
        <begin position="403"/>
        <end position="423"/>
    </location>
</feature>
<feature type="transmembrane region" description="Helical" evidence="3">
    <location>
        <begin position="427"/>
        <end position="447"/>
    </location>
</feature>
<feature type="transmembrane region" description="Helical" evidence="3">
    <location>
        <begin position="455"/>
        <end position="475"/>
    </location>
</feature>
<feature type="transmembrane region" description="Helical" evidence="3">
    <location>
        <begin position="526"/>
        <end position="546"/>
    </location>
</feature>
<feature type="glycosylation site" description="N-linked (GlcNAc...) asparagine" evidence="3">
    <location>
        <position position="488"/>
    </location>
</feature>
<feature type="glycosylation site" description="N-linked (GlcNAc...) asparagine" evidence="3">
    <location>
        <position position="497"/>
    </location>
</feature>